<proteinExistence type="inferred from homology"/>
<comment type="function">
    <text evidence="1">DNA-dependent RNA polymerase catalyzes the transcription of DNA into RNA using the four ribonucleoside triphosphates as substrates.</text>
</comment>
<comment type="catalytic activity">
    <reaction evidence="1">
        <text>RNA(n) + a ribonucleoside 5'-triphosphate = RNA(n+1) + diphosphate</text>
        <dbReference type="Rhea" id="RHEA:21248"/>
        <dbReference type="Rhea" id="RHEA-COMP:14527"/>
        <dbReference type="Rhea" id="RHEA-COMP:17342"/>
        <dbReference type="ChEBI" id="CHEBI:33019"/>
        <dbReference type="ChEBI" id="CHEBI:61557"/>
        <dbReference type="ChEBI" id="CHEBI:140395"/>
        <dbReference type="EC" id="2.7.7.6"/>
    </reaction>
</comment>
<comment type="cofactor">
    <cofactor evidence="1">
        <name>Zn(2+)</name>
        <dbReference type="ChEBI" id="CHEBI:29105"/>
    </cofactor>
    <text evidence="1">Binds 1 Zn(2+) ion per subunit.</text>
</comment>
<comment type="subunit">
    <text evidence="1">In plastids the minimal PEP RNA polymerase catalytic core is composed of four subunits: alpha, beta, beta', and beta''. When a (nuclear-encoded) sigma factor is associated with the core the holoenzyme is formed, which can initiate transcription.</text>
</comment>
<comment type="subcellular location">
    <subcellularLocation>
        <location evidence="1">Plastid</location>
        <location evidence="1">Chloroplast</location>
    </subcellularLocation>
</comment>
<comment type="similarity">
    <text evidence="1">Belongs to the RNA polymerase beta' chain family. RpoC2 subfamily.</text>
</comment>
<gene>
    <name evidence="1" type="primary">rpoC2</name>
</gene>
<geneLocation type="chloroplast"/>
<protein>
    <recommendedName>
        <fullName evidence="1">DNA-directed RNA polymerase subunit beta''</fullName>
        <ecNumber evidence="1">2.7.7.6</ecNumber>
    </recommendedName>
    <alternativeName>
        <fullName evidence="1">PEP</fullName>
    </alternativeName>
    <alternativeName>
        <fullName evidence="1">Plastid-encoded RNA polymerase subunit beta''</fullName>
        <shortName evidence="1">RNA polymerase subunit beta''</shortName>
    </alternativeName>
</protein>
<accession>B0Z4W1</accession>
<dbReference type="EC" id="2.7.7.6" evidence="1"/>
<dbReference type="EMBL" id="EU262889">
    <property type="protein sequence ID" value="ABW98873.1"/>
    <property type="molecule type" value="Genomic_DNA"/>
</dbReference>
<dbReference type="RefSeq" id="YP_001687368.1">
    <property type="nucleotide sequence ID" value="NC_010361.1"/>
</dbReference>
<dbReference type="SMR" id="B0Z4W1"/>
<dbReference type="GeneID" id="5951983"/>
<dbReference type="GO" id="GO:0009507">
    <property type="term" value="C:chloroplast"/>
    <property type="evidence" value="ECO:0007669"/>
    <property type="project" value="UniProtKB-SubCell"/>
</dbReference>
<dbReference type="GO" id="GO:0000428">
    <property type="term" value="C:DNA-directed RNA polymerase complex"/>
    <property type="evidence" value="ECO:0007669"/>
    <property type="project" value="UniProtKB-KW"/>
</dbReference>
<dbReference type="GO" id="GO:0005739">
    <property type="term" value="C:mitochondrion"/>
    <property type="evidence" value="ECO:0007669"/>
    <property type="project" value="GOC"/>
</dbReference>
<dbReference type="GO" id="GO:0003677">
    <property type="term" value="F:DNA binding"/>
    <property type="evidence" value="ECO:0007669"/>
    <property type="project" value="UniProtKB-UniRule"/>
</dbReference>
<dbReference type="GO" id="GO:0003899">
    <property type="term" value="F:DNA-directed RNA polymerase activity"/>
    <property type="evidence" value="ECO:0007669"/>
    <property type="project" value="UniProtKB-UniRule"/>
</dbReference>
<dbReference type="GO" id="GO:0008270">
    <property type="term" value="F:zinc ion binding"/>
    <property type="evidence" value="ECO:0007669"/>
    <property type="project" value="UniProtKB-UniRule"/>
</dbReference>
<dbReference type="GO" id="GO:0006351">
    <property type="term" value="P:DNA-templated transcription"/>
    <property type="evidence" value="ECO:0007669"/>
    <property type="project" value="UniProtKB-UniRule"/>
</dbReference>
<dbReference type="CDD" id="cd02655">
    <property type="entry name" value="RNAP_beta'_C"/>
    <property type="match status" value="1"/>
</dbReference>
<dbReference type="FunFam" id="1.10.132.30:FF:000002">
    <property type="entry name" value="DNA-directed RNA polymerase subunit beta"/>
    <property type="match status" value="1"/>
</dbReference>
<dbReference type="Gene3D" id="1.10.132.30">
    <property type="match status" value="1"/>
</dbReference>
<dbReference type="Gene3D" id="1.10.150.390">
    <property type="match status" value="1"/>
</dbReference>
<dbReference type="Gene3D" id="1.10.1790.20">
    <property type="match status" value="1"/>
</dbReference>
<dbReference type="Gene3D" id="1.10.274.100">
    <property type="entry name" value="RNA polymerase Rpb1, domain 3"/>
    <property type="match status" value="1"/>
</dbReference>
<dbReference type="HAMAP" id="MF_01324">
    <property type="entry name" value="RNApol_bact_RpoC2"/>
    <property type="match status" value="1"/>
</dbReference>
<dbReference type="InterPro" id="IPR012756">
    <property type="entry name" value="DNA-dir_RpoC2_beta_pp"/>
</dbReference>
<dbReference type="InterPro" id="IPR050254">
    <property type="entry name" value="RNA_pol_beta''_euk"/>
</dbReference>
<dbReference type="InterPro" id="IPR042102">
    <property type="entry name" value="RNA_pol_Rpb1_3_sf"/>
</dbReference>
<dbReference type="InterPro" id="IPR007083">
    <property type="entry name" value="RNA_pol_Rpb1_4"/>
</dbReference>
<dbReference type="InterPro" id="IPR007081">
    <property type="entry name" value="RNA_pol_Rpb1_5"/>
</dbReference>
<dbReference type="InterPro" id="IPR038120">
    <property type="entry name" value="Rpb1_funnel_sf"/>
</dbReference>
<dbReference type="NCBIfam" id="TIGR02388">
    <property type="entry name" value="rpoC2_cyan"/>
    <property type="match status" value="1"/>
</dbReference>
<dbReference type="PANTHER" id="PTHR34995">
    <property type="entry name" value="DNA-DIRECTED RNA POLYMERASE SUBUNIT BETA"/>
    <property type="match status" value="1"/>
</dbReference>
<dbReference type="PANTHER" id="PTHR34995:SF1">
    <property type="entry name" value="DNA-DIRECTED RNA POLYMERASE SUBUNIT BETA"/>
    <property type="match status" value="1"/>
</dbReference>
<dbReference type="Pfam" id="PF05000">
    <property type="entry name" value="RNA_pol_Rpb1_4"/>
    <property type="match status" value="1"/>
</dbReference>
<dbReference type="Pfam" id="PF04998">
    <property type="entry name" value="RNA_pol_Rpb1_5"/>
    <property type="match status" value="2"/>
</dbReference>
<dbReference type="SUPFAM" id="SSF64484">
    <property type="entry name" value="beta and beta-prime subunits of DNA dependent RNA-polymerase"/>
    <property type="match status" value="1"/>
</dbReference>
<feature type="chain" id="PRO_0000353575" description="DNA-directed RNA polymerase subunit beta''">
    <location>
        <begin position="1"/>
        <end position="1383"/>
    </location>
</feature>
<feature type="binding site" evidence="1">
    <location>
        <position position="220"/>
    </location>
    <ligand>
        <name>Zn(2+)</name>
        <dbReference type="ChEBI" id="CHEBI:29105"/>
    </ligand>
</feature>
<feature type="binding site" evidence="1">
    <location>
        <position position="289"/>
    </location>
    <ligand>
        <name>Zn(2+)</name>
        <dbReference type="ChEBI" id="CHEBI:29105"/>
    </ligand>
</feature>
<feature type="binding site" evidence="1">
    <location>
        <position position="296"/>
    </location>
    <ligand>
        <name>Zn(2+)</name>
        <dbReference type="ChEBI" id="CHEBI:29105"/>
    </ligand>
</feature>
<feature type="binding site" evidence="1">
    <location>
        <position position="299"/>
    </location>
    <ligand>
        <name>Zn(2+)</name>
        <dbReference type="ChEBI" id="CHEBI:29105"/>
    </ligand>
</feature>
<evidence type="ECO:0000255" key="1">
    <source>
        <dbReference type="HAMAP-Rule" id="MF_01324"/>
    </source>
</evidence>
<sequence>MDEGVNLVFHKKVIDGTAIKRLISRLIDHFGMAHTSHILDQVKTLGFQQATATSISLGIDDLLTIPSKGWLVQDAEQQSLSLEKHHHYGNVHAVEKLRQSIEVWYATSEYLRQEMNPNFRMTDPFNPVHIMSFSGARGNASQVHQLVGMRGLMSDPQGQMIDLPIQSNLREGLSLTEYIISCYGARKGVVDTAVRTSDAGYLTRRLVEVVQHIVVRRTDCGTLRGISVSPRRMPERIFIQTLIGRVLADDIYIGSRCIAIRNQDIGIGLVNRFITFRIQPISIRTPFTCRSTSWICRLCYGRSPTHGDLVELGEAVGIIAGQSIGEPGTQLTLRTFHTGGVFTGGTAEHVRAPSNGKIKFNFNEALVHPARTRHGHPALLCSMDLDVTIESEDILHNLTIPPKSFLLVQNNQYVESEQVIAEICAGTSTFHFKERVRKHIYSDSEGEMHWSTDVYHAPEFTYSNVHLLPKTSHLWILSGGSCRSRGAPFSLHKDQDQMNPRSTERERRYLSSLSANNDQIRYKFFSSSFSGKKKDDRSPGYSEMNRIICTLHCNLIYPSILRENSDLLAKRRRNRLVIPVQSSQEREKELIPHSGISIELPINGIFRKKSILAFFDDPRYRTKSSGITQYETMGMHSIVKKEGLVDYRGINEFKPKYQMTIDRFFFIPEEVHILPESSSIMVRNNSLIGVDTRIALNTRSRAGGLVRVERKKRGIALQIFSGTIHFPGETDKISWDSGILIPPGTGKINSKESKKWKNGIYVQRITPTKKKHFVLFRPVVTYEIADGLNLARLFPPDLCQEKDNMQLQIVNYIVYGNGKPIREISDTSIQLVRTWFILNWDQDKKSASAEAAHASFVEVRAKGLIRDFLRIDLVKSPILDPRKRNDPSGSGLISDNVSDHTNINPFYSKPKMKQSPRQNHGTIRTLLNQNKECPSLMILSASNCFRMGPFNDVKSQNVIKESIKKDAIIQIRNSIGPLGTALQVVNFDSFYYFITHNQVLLTKYLQVENLKQTFQVLQYYLMDESGRIYNPDPRSNIVLNSFNLSWYFLPHNNYENSCEEISTIVSLGQFICENGCIAKNGPYLRSGQVLIVQLDSVVIRSAKPYLATPGATVHGHYGEILYDGDTVVTFLYEKSRSGDITQGLPKVEQVLEVRSVDSISVNLEKRVENWNEHITRILGFPWGFLIGAELTIVQSRISLVNKIQKVYRSQGVQIHNRHIEIIVRQITSKVLVSEDGMSNVFLPRELIGLLRAERTGRALEESICYKAFLLGITRTSLNTQSFISEASFQETARVLAKAALRGRIDWLKGLKENVVIGGMIPVGTGFKGLVHCSKQHKSIPKNKHFFEGEIRDILFHHRELFDSCISKNFHDTPEQSFRVFNDS</sequence>
<organism>
    <name type="scientific">Oenothera biennis</name>
    <name type="common">German evening primrose</name>
    <name type="synonym">Onagra biennis</name>
    <dbReference type="NCBI Taxonomy" id="3942"/>
    <lineage>
        <taxon>Eukaryota</taxon>
        <taxon>Viridiplantae</taxon>
        <taxon>Streptophyta</taxon>
        <taxon>Embryophyta</taxon>
        <taxon>Tracheophyta</taxon>
        <taxon>Spermatophyta</taxon>
        <taxon>Magnoliopsida</taxon>
        <taxon>eudicotyledons</taxon>
        <taxon>Gunneridae</taxon>
        <taxon>Pentapetalae</taxon>
        <taxon>rosids</taxon>
        <taxon>malvids</taxon>
        <taxon>Myrtales</taxon>
        <taxon>Onagraceae</taxon>
        <taxon>Onagroideae</taxon>
        <taxon>Onagreae</taxon>
        <taxon>Oenothera</taxon>
    </lineage>
</organism>
<name>RPOC2_OENBI</name>
<reference key="1">
    <citation type="journal article" date="2008" name="Nucleic Acids Res.">
        <title>The complete nucleotide sequences of the five genetically distinct plastid genomes of Oenothera, subsection Oenothera: I. Sequence evaluation and plastome evolution.</title>
        <authorList>
            <person name="Greiner S."/>
            <person name="Wang X."/>
            <person name="Rauwolf U."/>
            <person name="Silber M.V."/>
            <person name="Mayer K."/>
            <person name="Meurer J."/>
            <person name="Haberer G."/>
            <person name="Herrmann R.G."/>
        </authorList>
    </citation>
    <scope>NUCLEOTIDE SEQUENCE [LARGE SCALE GENOMIC DNA]</scope>
    <source>
        <strain>cv. Suaveolens Grado</strain>
    </source>
</reference>
<keyword id="KW-0150">Chloroplast</keyword>
<keyword id="KW-0240">DNA-directed RNA polymerase</keyword>
<keyword id="KW-0479">Metal-binding</keyword>
<keyword id="KW-0548">Nucleotidyltransferase</keyword>
<keyword id="KW-0934">Plastid</keyword>
<keyword id="KW-0804">Transcription</keyword>
<keyword id="KW-0808">Transferase</keyword>
<keyword id="KW-0862">Zinc</keyword>